<dbReference type="EMBL" id="CP000488">
    <property type="protein sequence ID" value="ABL01973.1"/>
    <property type="molecule type" value="Genomic_DNA"/>
</dbReference>
<dbReference type="RefSeq" id="WP_011737599.1">
    <property type="nucleotide sequence ID" value="NC_008610.1"/>
</dbReference>
<dbReference type="SMR" id="A1AVL6"/>
<dbReference type="STRING" id="413404.Rmag_0181"/>
<dbReference type="KEGG" id="rma:Rmag_0181"/>
<dbReference type="eggNOG" id="COG0256">
    <property type="taxonomic scope" value="Bacteria"/>
</dbReference>
<dbReference type="HOGENOM" id="CLU_098841_0_1_6"/>
<dbReference type="OrthoDB" id="9810939at2"/>
<dbReference type="Proteomes" id="UP000002587">
    <property type="component" value="Chromosome"/>
</dbReference>
<dbReference type="GO" id="GO:0022625">
    <property type="term" value="C:cytosolic large ribosomal subunit"/>
    <property type="evidence" value="ECO:0007669"/>
    <property type="project" value="TreeGrafter"/>
</dbReference>
<dbReference type="GO" id="GO:0008097">
    <property type="term" value="F:5S rRNA binding"/>
    <property type="evidence" value="ECO:0007669"/>
    <property type="project" value="TreeGrafter"/>
</dbReference>
<dbReference type="GO" id="GO:0003735">
    <property type="term" value="F:structural constituent of ribosome"/>
    <property type="evidence" value="ECO:0007669"/>
    <property type="project" value="InterPro"/>
</dbReference>
<dbReference type="GO" id="GO:0006412">
    <property type="term" value="P:translation"/>
    <property type="evidence" value="ECO:0007669"/>
    <property type="project" value="UniProtKB-UniRule"/>
</dbReference>
<dbReference type="CDD" id="cd00432">
    <property type="entry name" value="Ribosomal_L18_L5e"/>
    <property type="match status" value="1"/>
</dbReference>
<dbReference type="FunFam" id="3.30.420.100:FF:000001">
    <property type="entry name" value="50S ribosomal protein L18"/>
    <property type="match status" value="1"/>
</dbReference>
<dbReference type="Gene3D" id="3.30.420.100">
    <property type="match status" value="1"/>
</dbReference>
<dbReference type="HAMAP" id="MF_01337_B">
    <property type="entry name" value="Ribosomal_uL18_B"/>
    <property type="match status" value="1"/>
</dbReference>
<dbReference type="InterPro" id="IPR004389">
    <property type="entry name" value="Ribosomal_uL18_bac-type"/>
</dbReference>
<dbReference type="InterPro" id="IPR005484">
    <property type="entry name" value="Ribosomal_uL18_bac/euk"/>
</dbReference>
<dbReference type="NCBIfam" id="TIGR00060">
    <property type="entry name" value="L18_bact"/>
    <property type="match status" value="1"/>
</dbReference>
<dbReference type="PANTHER" id="PTHR12899">
    <property type="entry name" value="39S RIBOSOMAL PROTEIN L18, MITOCHONDRIAL"/>
    <property type="match status" value="1"/>
</dbReference>
<dbReference type="PANTHER" id="PTHR12899:SF3">
    <property type="entry name" value="LARGE RIBOSOMAL SUBUNIT PROTEIN UL18M"/>
    <property type="match status" value="1"/>
</dbReference>
<dbReference type="Pfam" id="PF00861">
    <property type="entry name" value="Ribosomal_L18p"/>
    <property type="match status" value="1"/>
</dbReference>
<dbReference type="SUPFAM" id="SSF53137">
    <property type="entry name" value="Translational machinery components"/>
    <property type="match status" value="1"/>
</dbReference>
<accession>A1AVL6</accession>
<proteinExistence type="inferred from homology"/>
<feature type="chain" id="PRO_1000086682" description="Large ribosomal subunit protein uL18">
    <location>
        <begin position="1"/>
        <end position="115"/>
    </location>
</feature>
<protein>
    <recommendedName>
        <fullName evidence="1">Large ribosomal subunit protein uL18</fullName>
    </recommendedName>
    <alternativeName>
        <fullName evidence="2">50S ribosomal protein L18</fullName>
    </alternativeName>
</protein>
<gene>
    <name evidence="1" type="primary">rplR</name>
    <name type="ordered locus">Rmag_0181</name>
</gene>
<sequence length="115" mass="12350">MKLSKKQARLRRATKFRAKHAQGSTKRLCVHKTAQHIYAQIISPCGTKVLASASTLTAKLKNGGNVDAATKVGKEIAKAATSVKVIKVAFDRSGFKYHGRVKALADAAREGGLDF</sequence>
<organism>
    <name type="scientific">Ruthia magnifica subsp. Calyptogena magnifica</name>
    <dbReference type="NCBI Taxonomy" id="413404"/>
    <lineage>
        <taxon>Bacteria</taxon>
        <taxon>Pseudomonadati</taxon>
        <taxon>Pseudomonadota</taxon>
        <taxon>Gammaproteobacteria</taxon>
        <taxon>Candidatus Pseudothioglobaceae</taxon>
        <taxon>Candidatus Ruthturnera</taxon>
    </lineage>
</organism>
<evidence type="ECO:0000255" key="1">
    <source>
        <dbReference type="HAMAP-Rule" id="MF_01337"/>
    </source>
</evidence>
<evidence type="ECO:0000305" key="2"/>
<comment type="function">
    <text evidence="1">This is one of the proteins that bind and probably mediate the attachment of the 5S RNA into the large ribosomal subunit, where it forms part of the central protuberance.</text>
</comment>
<comment type="subunit">
    <text evidence="1">Part of the 50S ribosomal subunit; part of the 5S rRNA/L5/L18/L25 subcomplex. Contacts the 5S and 23S rRNAs.</text>
</comment>
<comment type="similarity">
    <text evidence="1">Belongs to the universal ribosomal protein uL18 family.</text>
</comment>
<reference key="1">
    <citation type="journal article" date="2007" name="Science">
        <title>The Calyptogena magnifica chemoautotrophic symbiont genome.</title>
        <authorList>
            <person name="Newton I.L.G."/>
            <person name="Woyke T."/>
            <person name="Auchtung T.A."/>
            <person name="Dilly G.F."/>
            <person name="Dutton R.J."/>
            <person name="Fisher M.C."/>
            <person name="Fontanez K.M."/>
            <person name="Lau E."/>
            <person name="Stewart F.J."/>
            <person name="Richardson P.M."/>
            <person name="Barry K.W."/>
            <person name="Saunders E."/>
            <person name="Detter J.C."/>
            <person name="Wu D."/>
            <person name="Eisen J.A."/>
            <person name="Cavanaugh C.M."/>
        </authorList>
    </citation>
    <scope>NUCLEOTIDE SEQUENCE [LARGE SCALE GENOMIC DNA]</scope>
</reference>
<keyword id="KW-0687">Ribonucleoprotein</keyword>
<keyword id="KW-0689">Ribosomal protein</keyword>
<keyword id="KW-0694">RNA-binding</keyword>
<keyword id="KW-0699">rRNA-binding</keyword>
<name>RL18_RUTMC</name>